<evidence type="ECO:0000255" key="1">
    <source>
        <dbReference type="HAMAP-Rule" id="MF_01322"/>
    </source>
</evidence>
<feature type="chain" id="PRO_0000353406" description="DNA-directed RNA polymerase subunit beta'">
    <location>
        <begin position="1"/>
        <end position="1420"/>
    </location>
</feature>
<feature type="binding site" evidence="1">
    <location>
        <position position="70"/>
    </location>
    <ligand>
        <name>Zn(2+)</name>
        <dbReference type="ChEBI" id="CHEBI:29105"/>
        <label>1</label>
    </ligand>
</feature>
<feature type="binding site" evidence="1">
    <location>
        <position position="72"/>
    </location>
    <ligand>
        <name>Zn(2+)</name>
        <dbReference type="ChEBI" id="CHEBI:29105"/>
        <label>1</label>
    </ligand>
</feature>
<feature type="binding site" evidence="1">
    <location>
        <position position="85"/>
    </location>
    <ligand>
        <name>Zn(2+)</name>
        <dbReference type="ChEBI" id="CHEBI:29105"/>
        <label>1</label>
    </ligand>
</feature>
<feature type="binding site" evidence="1">
    <location>
        <position position="88"/>
    </location>
    <ligand>
        <name>Zn(2+)</name>
        <dbReference type="ChEBI" id="CHEBI:29105"/>
        <label>1</label>
    </ligand>
</feature>
<feature type="binding site" evidence="1">
    <location>
        <position position="464"/>
    </location>
    <ligand>
        <name>Mg(2+)</name>
        <dbReference type="ChEBI" id="CHEBI:18420"/>
    </ligand>
</feature>
<feature type="binding site" evidence="1">
    <location>
        <position position="466"/>
    </location>
    <ligand>
        <name>Mg(2+)</name>
        <dbReference type="ChEBI" id="CHEBI:18420"/>
    </ligand>
</feature>
<feature type="binding site" evidence="1">
    <location>
        <position position="468"/>
    </location>
    <ligand>
        <name>Mg(2+)</name>
        <dbReference type="ChEBI" id="CHEBI:18420"/>
    </ligand>
</feature>
<feature type="binding site" evidence="1">
    <location>
        <position position="823"/>
    </location>
    <ligand>
        <name>Zn(2+)</name>
        <dbReference type="ChEBI" id="CHEBI:29105"/>
        <label>2</label>
    </ligand>
</feature>
<feature type="binding site" evidence="1">
    <location>
        <position position="897"/>
    </location>
    <ligand>
        <name>Zn(2+)</name>
        <dbReference type="ChEBI" id="CHEBI:29105"/>
        <label>2</label>
    </ligand>
</feature>
<feature type="binding site" evidence="1">
    <location>
        <position position="904"/>
    </location>
    <ligand>
        <name>Zn(2+)</name>
        <dbReference type="ChEBI" id="CHEBI:29105"/>
        <label>2</label>
    </ligand>
</feature>
<feature type="binding site" evidence="1">
    <location>
        <position position="907"/>
    </location>
    <ligand>
        <name>Zn(2+)</name>
        <dbReference type="ChEBI" id="CHEBI:29105"/>
        <label>2</label>
    </ligand>
</feature>
<organism>
    <name type="scientific">Polynucleobacter asymbioticus (strain DSM 18221 / CIP 109841 / QLW-P1DMWA-1)</name>
    <name type="common">Polynucleobacter necessarius subsp. asymbioticus</name>
    <dbReference type="NCBI Taxonomy" id="312153"/>
    <lineage>
        <taxon>Bacteria</taxon>
        <taxon>Pseudomonadati</taxon>
        <taxon>Pseudomonadota</taxon>
        <taxon>Betaproteobacteria</taxon>
        <taxon>Burkholderiales</taxon>
        <taxon>Burkholderiaceae</taxon>
        <taxon>Polynucleobacter</taxon>
    </lineage>
</organism>
<proteinExistence type="inferred from homology"/>
<name>RPOC_POLAQ</name>
<accession>A4SUV5</accession>
<protein>
    <recommendedName>
        <fullName evidence="1">DNA-directed RNA polymerase subunit beta'</fullName>
        <shortName evidence="1">RNAP subunit beta'</shortName>
        <ecNumber evidence="1">2.7.7.6</ecNumber>
    </recommendedName>
    <alternativeName>
        <fullName evidence="1">RNA polymerase subunit beta'</fullName>
    </alternativeName>
    <alternativeName>
        <fullName evidence="1">Transcriptase subunit beta'</fullName>
    </alternativeName>
</protein>
<comment type="function">
    <text evidence="1">DNA-dependent RNA polymerase catalyzes the transcription of DNA into RNA using the four ribonucleoside triphosphates as substrates.</text>
</comment>
<comment type="catalytic activity">
    <reaction evidence="1">
        <text>RNA(n) + a ribonucleoside 5'-triphosphate = RNA(n+1) + diphosphate</text>
        <dbReference type="Rhea" id="RHEA:21248"/>
        <dbReference type="Rhea" id="RHEA-COMP:14527"/>
        <dbReference type="Rhea" id="RHEA-COMP:17342"/>
        <dbReference type="ChEBI" id="CHEBI:33019"/>
        <dbReference type="ChEBI" id="CHEBI:61557"/>
        <dbReference type="ChEBI" id="CHEBI:140395"/>
        <dbReference type="EC" id="2.7.7.6"/>
    </reaction>
</comment>
<comment type="cofactor">
    <cofactor evidence="1">
        <name>Mg(2+)</name>
        <dbReference type="ChEBI" id="CHEBI:18420"/>
    </cofactor>
    <text evidence="1">Binds 1 Mg(2+) ion per subunit.</text>
</comment>
<comment type="cofactor">
    <cofactor evidence="1">
        <name>Zn(2+)</name>
        <dbReference type="ChEBI" id="CHEBI:29105"/>
    </cofactor>
    <text evidence="1">Binds 2 Zn(2+) ions per subunit.</text>
</comment>
<comment type="subunit">
    <text evidence="1">The RNAP catalytic core consists of 2 alpha, 1 beta, 1 beta' and 1 omega subunit. When a sigma factor is associated with the core the holoenzyme is formed, which can initiate transcription.</text>
</comment>
<comment type="similarity">
    <text evidence="1">Belongs to the RNA polymerase beta' chain family.</text>
</comment>
<sequence>MKALLDLFKQTQGDEQFDVIKIGLASPEKIRSWSFGEVRKPETINYRTFKPERDGLFCAKIFGPTKDYECLCGKYKRLKFRGVICEKCGVEVTLAKVRRERMGHIELAAPVAHIWFLKSLPSRLGMVLDMTLRDIERVLYFEAYVVVDPGMTPEGAMKRGQIMSEDEYIAKTEEYGDGAFTAIMGAEGIRDLLRGIDIDREVETIRADLKATGSDAKIKKYAKRLKVLEAFQTSGIKPDWMIMEVLPVLPPELRPLVPLDGGRFATSDLNDLYRRVINRNNRLKRLLELRAPEIIVRNEKRMLQEAVDSLLDNGRRGKAMTGANKRPLKSLAEMIKGKSGRFRQNLLGKRVDYSGRSVIVVGPTLKLHQCGLPKLMALELFKPFIFNKLETLGIATTIKAAKKEVESQTPIVWDILEEVIREHPIMLNRAPTLHRLGIQAFEPMLIEGKAIQLHPLVCAAFNADFDGDQMAVHVPLSLEAQMEARTLMLASNNVLFPANGEPSIVPSQDVVLGLYYATRDKINGKGEGMVFANIAEVIRAHEAGQVELASRVAVRITEFEIVDKKAEGDARFAEKTKIYQTSVGRAILSEILPKGMTFEEINKPLKKKEISRLINTSFRKCGLRETVIFADRLLQSGFRLATNAGISVAIDDMLIPTSKERIITEATNKVKEYDKQFMSGLVTNQERYNNVVDIWGAAGDQVGKAMMDELSHVDVLDRNSKTVRQESFNSIYMMADSGARGSAAQIRQLAGMRGLMAKPDGSIIETPITANFREGLNVLQYFISTHGARKGLADTALKTANSGYLTRRLCDVTQDLVVIEDDCGATSGVTMKALVEGGEIIEALRDRILGRVCIGDIVHPDTQEVIVANDTLLDEDHVDQIVALGIDEVKVRTVLSCLTRFGLCAKCYGRDLGRGGLVNVGEAVGVIAAQSIGEPGTQLTMRTFHIGGAASRALVASNIEAKSNGALKFSGTMRIVKNAKGEQIVISRSGEALIIDDNGRERERHKVPYGATLLFKEDAAVKAGASLATWDPLTRPIISEYAGIARFDNVEEGVTVAKQVDEVTGLSTLVVIDGKRRSAASKGVRPMINLVDDKGGEVMIAGTDHPVNIGLQVGALITVKDGQKVEVGEVLARIPIESQKTRDITGGLPRVAELFEARSPKDAAVLAKVTGTVSFGKETKGKQRLVITDMDGEANEFLIPKEKQVLVHDGQVVNKGEMIVEGPADPHDILTLRGIEELAIYIVDEVQDVYRLQGVKINDKHIEVIVRQMLRRVQITDGGDTAYITGEQVERSKLYDANDLVIAAGKRPAQFENVLLGITKASLSTDSFISAASFQETTRVLTEAAIMGKTDTLRGLKENVIIGRLIPAGTGLSYRRARKVREQFERDRAQMIAAEEEAIANTPVEIEAEVIAPAGEADPS</sequence>
<dbReference type="EC" id="2.7.7.6" evidence="1"/>
<dbReference type="EMBL" id="CP000655">
    <property type="protein sequence ID" value="ABP33269.1"/>
    <property type="molecule type" value="Genomic_DNA"/>
</dbReference>
<dbReference type="RefSeq" id="WP_011901895.1">
    <property type="nucleotide sequence ID" value="NC_009379.1"/>
</dbReference>
<dbReference type="SMR" id="A4SUV5"/>
<dbReference type="GeneID" id="31480393"/>
<dbReference type="KEGG" id="pnu:Pnuc_0047"/>
<dbReference type="eggNOG" id="COG0086">
    <property type="taxonomic scope" value="Bacteria"/>
</dbReference>
<dbReference type="HOGENOM" id="CLU_000524_3_1_4"/>
<dbReference type="Proteomes" id="UP000000231">
    <property type="component" value="Chromosome"/>
</dbReference>
<dbReference type="GO" id="GO:0000428">
    <property type="term" value="C:DNA-directed RNA polymerase complex"/>
    <property type="evidence" value="ECO:0007669"/>
    <property type="project" value="UniProtKB-KW"/>
</dbReference>
<dbReference type="GO" id="GO:0003677">
    <property type="term" value="F:DNA binding"/>
    <property type="evidence" value="ECO:0007669"/>
    <property type="project" value="UniProtKB-UniRule"/>
</dbReference>
<dbReference type="GO" id="GO:0003899">
    <property type="term" value="F:DNA-directed RNA polymerase activity"/>
    <property type="evidence" value="ECO:0007669"/>
    <property type="project" value="UniProtKB-UniRule"/>
</dbReference>
<dbReference type="GO" id="GO:0000287">
    <property type="term" value="F:magnesium ion binding"/>
    <property type="evidence" value="ECO:0007669"/>
    <property type="project" value="UniProtKB-UniRule"/>
</dbReference>
<dbReference type="GO" id="GO:0008270">
    <property type="term" value="F:zinc ion binding"/>
    <property type="evidence" value="ECO:0007669"/>
    <property type="project" value="UniProtKB-UniRule"/>
</dbReference>
<dbReference type="GO" id="GO:0006351">
    <property type="term" value="P:DNA-templated transcription"/>
    <property type="evidence" value="ECO:0007669"/>
    <property type="project" value="UniProtKB-UniRule"/>
</dbReference>
<dbReference type="CDD" id="cd02655">
    <property type="entry name" value="RNAP_beta'_C"/>
    <property type="match status" value="1"/>
</dbReference>
<dbReference type="CDD" id="cd01609">
    <property type="entry name" value="RNAP_beta'_N"/>
    <property type="match status" value="1"/>
</dbReference>
<dbReference type="FunFam" id="1.10.132.30:FF:000003">
    <property type="entry name" value="DNA-directed RNA polymerase subunit beta"/>
    <property type="match status" value="1"/>
</dbReference>
<dbReference type="FunFam" id="1.10.150.390:FF:000002">
    <property type="entry name" value="DNA-directed RNA polymerase subunit beta"/>
    <property type="match status" value="1"/>
</dbReference>
<dbReference type="FunFam" id="4.10.860.120:FF:000001">
    <property type="entry name" value="DNA-directed RNA polymerase subunit beta"/>
    <property type="match status" value="1"/>
</dbReference>
<dbReference type="Gene3D" id="1.10.132.30">
    <property type="match status" value="1"/>
</dbReference>
<dbReference type="Gene3D" id="1.10.150.390">
    <property type="match status" value="1"/>
</dbReference>
<dbReference type="Gene3D" id="1.10.1790.20">
    <property type="match status" value="1"/>
</dbReference>
<dbReference type="Gene3D" id="1.10.40.90">
    <property type="match status" value="1"/>
</dbReference>
<dbReference type="Gene3D" id="2.40.40.20">
    <property type="match status" value="1"/>
</dbReference>
<dbReference type="Gene3D" id="2.40.50.100">
    <property type="match status" value="3"/>
</dbReference>
<dbReference type="Gene3D" id="4.10.860.120">
    <property type="entry name" value="RNA polymerase II, clamp domain"/>
    <property type="match status" value="1"/>
</dbReference>
<dbReference type="Gene3D" id="1.10.274.100">
    <property type="entry name" value="RNA polymerase Rpb1, domain 3"/>
    <property type="match status" value="1"/>
</dbReference>
<dbReference type="HAMAP" id="MF_01322">
    <property type="entry name" value="RNApol_bact_RpoC"/>
    <property type="match status" value="1"/>
</dbReference>
<dbReference type="InterPro" id="IPR045867">
    <property type="entry name" value="DNA-dir_RpoC_beta_prime"/>
</dbReference>
<dbReference type="InterPro" id="IPR012754">
    <property type="entry name" value="DNA-dir_RpoC_beta_prime_bact"/>
</dbReference>
<dbReference type="InterPro" id="IPR000722">
    <property type="entry name" value="RNA_pol_asu"/>
</dbReference>
<dbReference type="InterPro" id="IPR006592">
    <property type="entry name" value="RNA_pol_N"/>
</dbReference>
<dbReference type="InterPro" id="IPR007080">
    <property type="entry name" value="RNA_pol_Rpb1_1"/>
</dbReference>
<dbReference type="InterPro" id="IPR007066">
    <property type="entry name" value="RNA_pol_Rpb1_3"/>
</dbReference>
<dbReference type="InterPro" id="IPR042102">
    <property type="entry name" value="RNA_pol_Rpb1_3_sf"/>
</dbReference>
<dbReference type="InterPro" id="IPR007083">
    <property type="entry name" value="RNA_pol_Rpb1_4"/>
</dbReference>
<dbReference type="InterPro" id="IPR007081">
    <property type="entry name" value="RNA_pol_Rpb1_5"/>
</dbReference>
<dbReference type="InterPro" id="IPR044893">
    <property type="entry name" value="RNA_pol_Rpb1_clamp_domain"/>
</dbReference>
<dbReference type="InterPro" id="IPR038120">
    <property type="entry name" value="Rpb1_funnel_sf"/>
</dbReference>
<dbReference type="NCBIfam" id="TIGR02386">
    <property type="entry name" value="rpoC_TIGR"/>
    <property type="match status" value="1"/>
</dbReference>
<dbReference type="PANTHER" id="PTHR19376">
    <property type="entry name" value="DNA-DIRECTED RNA POLYMERASE"/>
    <property type="match status" value="1"/>
</dbReference>
<dbReference type="PANTHER" id="PTHR19376:SF54">
    <property type="entry name" value="DNA-DIRECTED RNA POLYMERASE SUBUNIT BETA"/>
    <property type="match status" value="1"/>
</dbReference>
<dbReference type="Pfam" id="PF04997">
    <property type="entry name" value="RNA_pol_Rpb1_1"/>
    <property type="match status" value="1"/>
</dbReference>
<dbReference type="Pfam" id="PF00623">
    <property type="entry name" value="RNA_pol_Rpb1_2"/>
    <property type="match status" value="2"/>
</dbReference>
<dbReference type="Pfam" id="PF04983">
    <property type="entry name" value="RNA_pol_Rpb1_3"/>
    <property type="match status" value="1"/>
</dbReference>
<dbReference type="Pfam" id="PF05000">
    <property type="entry name" value="RNA_pol_Rpb1_4"/>
    <property type="match status" value="1"/>
</dbReference>
<dbReference type="Pfam" id="PF04998">
    <property type="entry name" value="RNA_pol_Rpb1_5"/>
    <property type="match status" value="1"/>
</dbReference>
<dbReference type="SMART" id="SM00663">
    <property type="entry name" value="RPOLA_N"/>
    <property type="match status" value="1"/>
</dbReference>
<dbReference type="SUPFAM" id="SSF64484">
    <property type="entry name" value="beta and beta-prime subunits of DNA dependent RNA-polymerase"/>
    <property type="match status" value="1"/>
</dbReference>
<keyword id="KW-0240">DNA-directed RNA polymerase</keyword>
<keyword id="KW-0460">Magnesium</keyword>
<keyword id="KW-0479">Metal-binding</keyword>
<keyword id="KW-0548">Nucleotidyltransferase</keyword>
<keyword id="KW-1185">Reference proteome</keyword>
<keyword id="KW-0804">Transcription</keyword>
<keyword id="KW-0808">Transferase</keyword>
<keyword id="KW-0862">Zinc</keyword>
<gene>
    <name evidence="1" type="primary">rpoC</name>
    <name type="ordered locus">Pnuc_0047</name>
</gene>
<reference key="1">
    <citation type="journal article" date="2012" name="Stand. Genomic Sci.">
        <title>Complete genome sequence of Polynucleobacter necessarius subsp. asymbioticus type strain (QLW-P1DMWA-1(T)).</title>
        <authorList>
            <person name="Meincke L."/>
            <person name="Copeland A."/>
            <person name="Lapidus A."/>
            <person name="Lucas S."/>
            <person name="Berry K.W."/>
            <person name="Del Rio T.G."/>
            <person name="Hammon N."/>
            <person name="Dalin E."/>
            <person name="Tice H."/>
            <person name="Pitluck S."/>
            <person name="Richardson P."/>
            <person name="Bruce D."/>
            <person name="Goodwin L."/>
            <person name="Han C."/>
            <person name="Tapia R."/>
            <person name="Detter J.C."/>
            <person name="Schmutz J."/>
            <person name="Brettin T."/>
            <person name="Larimer F."/>
            <person name="Land M."/>
            <person name="Hauser L."/>
            <person name="Kyrpides N.C."/>
            <person name="Ivanova N."/>
            <person name="Goker M."/>
            <person name="Woyke T."/>
            <person name="Wu Q.L."/>
            <person name="Pockl M."/>
            <person name="Hahn M.W."/>
            <person name="Klenk H.P."/>
        </authorList>
    </citation>
    <scope>NUCLEOTIDE SEQUENCE [LARGE SCALE GENOMIC DNA]</scope>
    <source>
        <strain>DSM 18221 / CIP 109841 / QLW-P1DMWA-1</strain>
    </source>
</reference>